<organism>
    <name type="scientific">Thermococcus kodakarensis (strain ATCC BAA-918 / JCM 12380 / KOD1)</name>
    <name type="common">Pyrococcus kodakaraensis (strain KOD1)</name>
    <dbReference type="NCBI Taxonomy" id="69014"/>
    <lineage>
        <taxon>Archaea</taxon>
        <taxon>Methanobacteriati</taxon>
        <taxon>Methanobacteriota</taxon>
        <taxon>Thermococci</taxon>
        <taxon>Thermococcales</taxon>
        <taxon>Thermococcaceae</taxon>
        <taxon>Thermococcus</taxon>
    </lineage>
</organism>
<protein>
    <recommendedName>
        <fullName>Polyribonucleotide 5'-hydroxyl-kinase TK1956</fullName>
        <ecNumber>2.7.1.78</ecNumber>
    </recommendedName>
    <alternativeName>
        <fullName>Polynucleotide kinase TK1956</fullName>
    </alternativeName>
</protein>
<evidence type="ECO:0000250" key="1"/>
<evidence type="ECO:0000255" key="2"/>
<dbReference type="EC" id="2.7.1.78"/>
<dbReference type="EMBL" id="AP006878">
    <property type="protein sequence ID" value="BAD86145.1"/>
    <property type="molecule type" value="Genomic_DNA"/>
</dbReference>
<dbReference type="RefSeq" id="WP_011250906.1">
    <property type="nucleotide sequence ID" value="NC_006624.1"/>
</dbReference>
<dbReference type="SMR" id="Q5JDN6"/>
<dbReference type="FunCoup" id="Q5JDN6">
    <property type="interactions" value="86"/>
</dbReference>
<dbReference type="STRING" id="69014.TK1956"/>
<dbReference type="EnsemblBacteria" id="BAD86145">
    <property type="protein sequence ID" value="BAD86145"/>
    <property type="gene ID" value="TK1956"/>
</dbReference>
<dbReference type="GeneID" id="78448487"/>
<dbReference type="KEGG" id="tko:TK1956"/>
<dbReference type="PATRIC" id="fig|69014.16.peg.1910"/>
<dbReference type="eggNOG" id="arCOG04127">
    <property type="taxonomic scope" value="Archaea"/>
</dbReference>
<dbReference type="HOGENOM" id="CLU_051301_0_1_2"/>
<dbReference type="InParanoid" id="Q5JDN6"/>
<dbReference type="OrthoDB" id="359472at2157"/>
<dbReference type="PhylomeDB" id="Q5JDN6"/>
<dbReference type="Proteomes" id="UP000000536">
    <property type="component" value="Chromosome"/>
</dbReference>
<dbReference type="GO" id="GO:0005524">
    <property type="term" value="F:ATP binding"/>
    <property type="evidence" value="ECO:0007669"/>
    <property type="project" value="UniProtKB-KW"/>
</dbReference>
<dbReference type="GO" id="GO:0046404">
    <property type="term" value="F:ATP-dependent polydeoxyribonucleotide 5'-hydroxyl-kinase activity"/>
    <property type="evidence" value="ECO:0007669"/>
    <property type="project" value="RHEA"/>
</dbReference>
<dbReference type="GO" id="GO:0051736">
    <property type="term" value="F:ATP-dependent polyribonucleotide 5'-hydroxyl-kinase activity"/>
    <property type="evidence" value="ECO:0007669"/>
    <property type="project" value="RHEA"/>
</dbReference>
<dbReference type="GO" id="GO:0051731">
    <property type="term" value="F:polynucleotide 5'-hydroxyl-kinase activity"/>
    <property type="evidence" value="ECO:0000318"/>
    <property type="project" value="GO_Central"/>
</dbReference>
<dbReference type="GO" id="GO:0006396">
    <property type="term" value="P:RNA processing"/>
    <property type="evidence" value="ECO:0000318"/>
    <property type="project" value="GO_Central"/>
</dbReference>
<dbReference type="Gene3D" id="3.40.50.300">
    <property type="entry name" value="P-loop containing nucleotide triphosphate hydrolases"/>
    <property type="match status" value="1"/>
</dbReference>
<dbReference type="InterPro" id="IPR045116">
    <property type="entry name" value="Clp1/Grc3"/>
</dbReference>
<dbReference type="InterPro" id="IPR032319">
    <property type="entry name" value="CLP1_P"/>
</dbReference>
<dbReference type="InterPro" id="IPR027417">
    <property type="entry name" value="P-loop_NTPase"/>
</dbReference>
<dbReference type="PANTHER" id="PTHR12755">
    <property type="entry name" value="CLEAVAGE/POLYADENYLATION FACTOR IA SUBUNIT CLP1P"/>
    <property type="match status" value="1"/>
</dbReference>
<dbReference type="PANTHER" id="PTHR12755:SF3">
    <property type="entry name" value="POLYNUCLEOTIDE 5'-HYDROXYL-KINASE NOL9"/>
    <property type="match status" value="1"/>
</dbReference>
<dbReference type="Pfam" id="PF16575">
    <property type="entry name" value="CLP1_P"/>
    <property type="match status" value="1"/>
</dbReference>
<dbReference type="SUPFAM" id="SSF52540">
    <property type="entry name" value="P-loop containing nucleoside triphosphate hydrolases"/>
    <property type="match status" value="1"/>
</dbReference>
<name>PRNK_THEKO</name>
<gene>
    <name type="ordered locus">TK1956</name>
</gene>
<proteinExistence type="inferred from homology"/>
<sequence>MNKARYTQDVPEDRIKLLESIASYNKPFTLMVVGGVDSGKSTLITFLGNELLSLGFKVAVVDSDVGQKGVLPPGTISLAIPEGPFESMSELEGVAHYFVGTTAPSQFIGEMAVGVKRMVEIARNVADVVLIDTTGFVTGVGAEMKRLKAELVKPDIIAVIHSGELSGLVKALEPYGGVIELAVSETVKRYPLEERRNLRAEKWRNYFRDSQLVEFSASEVAITGTSLFHGIPLNADENELLEKAFGWLVVAGWKNKGYTVVKADVEKFPRAHSRELKAIDFEKLSNLLVGLIDGEGLCMGVGVLKWINFSEGRLQILTPVRDLSGVREIRFGRIRVTEEGEELGLLRRDEL</sequence>
<comment type="function">
    <text evidence="1">Polynucleotide kinase that can phosphorylate the 5'-hydroxyl groups of both single-stranded RNA (ssRNA) and single-stranded DNA (ssDNA). Exhibits a strong preference for ssRNA (By similarity).</text>
</comment>
<comment type="catalytic activity">
    <reaction>
        <text>a 5'-end dephospho-2'-deoxyribonucleoside-DNA + ATP = a 5'-end 5'-phospho-2'-deoxyribonucleoside-DNA + ADP + H(+)</text>
        <dbReference type="Rhea" id="RHEA:15669"/>
        <dbReference type="Rhea" id="RHEA-COMP:13180"/>
        <dbReference type="Rhea" id="RHEA-COMP:13184"/>
        <dbReference type="ChEBI" id="CHEBI:15378"/>
        <dbReference type="ChEBI" id="CHEBI:30616"/>
        <dbReference type="ChEBI" id="CHEBI:136412"/>
        <dbReference type="ChEBI" id="CHEBI:136416"/>
        <dbReference type="ChEBI" id="CHEBI:456216"/>
        <dbReference type="EC" id="2.7.1.78"/>
    </reaction>
</comment>
<comment type="catalytic activity">
    <reaction>
        <text>a 5'-end dephospho-ribonucleoside-RNA + ATP = a 5'-end 5'-phospho-ribonucleoside-RNA + ADP + H(+)</text>
        <dbReference type="Rhea" id="RHEA:54580"/>
        <dbReference type="Rhea" id="RHEA-COMP:13936"/>
        <dbReference type="Rhea" id="RHEA-COMP:15179"/>
        <dbReference type="ChEBI" id="CHEBI:15378"/>
        <dbReference type="ChEBI" id="CHEBI:30616"/>
        <dbReference type="ChEBI" id="CHEBI:138282"/>
        <dbReference type="ChEBI" id="CHEBI:138284"/>
        <dbReference type="ChEBI" id="CHEBI:456216"/>
        <dbReference type="EC" id="2.7.1.78"/>
    </reaction>
</comment>
<comment type="cofactor">
    <cofactor evidence="1">
        <name>a divalent metal cation</name>
        <dbReference type="ChEBI" id="CHEBI:60240"/>
    </cofactor>
</comment>
<reference key="1">
    <citation type="journal article" date="2005" name="Genome Res.">
        <title>Complete genome sequence of the hyperthermophilic archaeon Thermococcus kodakaraensis KOD1 and comparison with Pyrococcus genomes.</title>
        <authorList>
            <person name="Fukui T."/>
            <person name="Atomi H."/>
            <person name="Kanai T."/>
            <person name="Matsumi R."/>
            <person name="Fujiwara S."/>
            <person name="Imanaka T."/>
        </authorList>
    </citation>
    <scope>NUCLEOTIDE SEQUENCE [LARGE SCALE GENOMIC DNA]</scope>
    <source>
        <strain>ATCC BAA-918 / JCM 12380 / KOD1</strain>
    </source>
</reference>
<keyword id="KW-0067">ATP-binding</keyword>
<keyword id="KW-0418">Kinase</keyword>
<keyword id="KW-0547">Nucleotide-binding</keyword>
<keyword id="KW-1185">Reference proteome</keyword>
<keyword id="KW-0808">Transferase</keyword>
<accession>Q5JDN6</accession>
<feature type="chain" id="PRO_0000376018" description="Polyribonucleotide 5'-hydroxyl-kinase TK1956">
    <location>
        <begin position="1"/>
        <end position="351"/>
    </location>
</feature>
<feature type="binding site" evidence="2">
    <location>
        <begin position="34"/>
        <end position="41"/>
    </location>
    <ligand>
        <name>ATP</name>
        <dbReference type="ChEBI" id="CHEBI:30616"/>
    </ligand>
</feature>